<evidence type="ECO:0000255" key="1">
    <source>
        <dbReference type="HAMAP-Rule" id="MF_00910"/>
    </source>
</evidence>
<gene>
    <name evidence="1" type="primary">ftsL</name>
    <name type="ordered locus">SF0080</name>
    <name type="ordered locus">S0082</name>
</gene>
<protein>
    <recommendedName>
        <fullName evidence="1">Cell division protein FtsL</fullName>
    </recommendedName>
</protein>
<feature type="chain" id="PRO_0000087374" description="Cell division protein FtsL">
    <location>
        <begin position="1"/>
        <end position="121"/>
    </location>
</feature>
<feature type="topological domain" description="Cytoplasmic" evidence="1">
    <location>
        <begin position="1"/>
        <end position="34"/>
    </location>
</feature>
<feature type="transmembrane region" description="Helical" evidence="1">
    <location>
        <begin position="35"/>
        <end position="57"/>
    </location>
</feature>
<feature type="topological domain" description="Periplasmic" evidence="1">
    <location>
        <begin position="58"/>
        <end position="121"/>
    </location>
</feature>
<accession>P0AEN7</accession>
<accession>P22187</accession>
<accession>Q8KMX6</accession>
<sequence>MISRVTEALSKVKGSMGSHERHALPGVIGDDLLRFGKLPLCLFICIILTAVTVVTTAHHTRLLTAQREQLVLERDALDIEWRNLILEENALGDHSRVERIATEKLQMQHVDPSQENIVVQK</sequence>
<name>FTSL_SHIFL</name>
<reference key="1">
    <citation type="journal article" date="2002" name="Nucleic Acids Res.">
        <title>Genome sequence of Shigella flexneri 2a: insights into pathogenicity through comparison with genomes of Escherichia coli K12 and O157.</title>
        <authorList>
            <person name="Jin Q."/>
            <person name="Yuan Z."/>
            <person name="Xu J."/>
            <person name="Wang Y."/>
            <person name="Shen Y."/>
            <person name="Lu W."/>
            <person name="Wang J."/>
            <person name="Liu H."/>
            <person name="Yang J."/>
            <person name="Yang F."/>
            <person name="Zhang X."/>
            <person name="Zhang J."/>
            <person name="Yang G."/>
            <person name="Wu H."/>
            <person name="Qu D."/>
            <person name="Dong J."/>
            <person name="Sun L."/>
            <person name="Xue Y."/>
            <person name="Zhao A."/>
            <person name="Gao Y."/>
            <person name="Zhu J."/>
            <person name="Kan B."/>
            <person name="Ding K."/>
            <person name="Chen S."/>
            <person name="Cheng H."/>
            <person name="Yao Z."/>
            <person name="He B."/>
            <person name="Chen R."/>
            <person name="Ma D."/>
            <person name="Qiang B."/>
            <person name="Wen Y."/>
            <person name="Hou Y."/>
            <person name="Yu J."/>
        </authorList>
    </citation>
    <scope>NUCLEOTIDE SEQUENCE [LARGE SCALE GENOMIC DNA]</scope>
    <source>
        <strain>301 / Serotype 2a</strain>
    </source>
</reference>
<reference key="2">
    <citation type="journal article" date="2003" name="Infect. Immun.">
        <title>Complete genome sequence and comparative genomics of Shigella flexneri serotype 2a strain 2457T.</title>
        <authorList>
            <person name="Wei J."/>
            <person name="Goldberg M.B."/>
            <person name="Burland V."/>
            <person name="Venkatesan M.M."/>
            <person name="Deng W."/>
            <person name="Fournier G."/>
            <person name="Mayhew G.F."/>
            <person name="Plunkett G. III"/>
            <person name="Rose D.J."/>
            <person name="Darling A."/>
            <person name="Mau B."/>
            <person name="Perna N.T."/>
            <person name="Payne S.M."/>
            <person name="Runyen-Janecky L.J."/>
            <person name="Zhou S."/>
            <person name="Schwartz D.C."/>
            <person name="Blattner F.R."/>
        </authorList>
    </citation>
    <scope>NUCLEOTIDE SEQUENCE [LARGE SCALE GENOMIC DNA]</scope>
    <source>
        <strain>ATCC 700930 / 2457T / Serotype 2a</strain>
    </source>
</reference>
<organism>
    <name type="scientific">Shigella flexneri</name>
    <dbReference type="NCBI Taxonomy" id="623"/>
    <lineage>
        <taxon>Bacteria</taxon>
        <taxon>Pseudomonadati</taxon>
        <taxon>Pseudomonadota</taxon>
        <taxon>Gammaproteobacteria</taxon>
        <taxon>Enterobacterales</taxon>
        <taxon>Enterobacteriaceae</taxon>
        <taxon>Shigella</taxon>
    </lineage>
</organism>
<comment type="function">
    <text evidence="1">Essential cell division protein. May link together the upstream cell division proteins, which are predominantly cytoplasmic, with the downstream cell division proteins, which are predominantly periplasmic.</text>
</comment>
<comment type="subunit">
    <text evidence="1">Part of a complex composed of FtsB, FtsL and FtsQ.</text>
</comment>
<comment type="subcellular location">
    <subcellularLocation>
        <location evidence="1">Cell inner membrane</location>
        <topology evidence="1">Single-pass type II membrane protein</topology>
    </subcellularLocation>
    <text evidence="1">Localizes to the division septum where it forms a ring structure.</text>
</comment>
<comment type="similarity">
    <text evidence="1">Belongs to the FtsL family.</text>
</comment>
<keyword id="KW-0131">Cell cycle</keyword>
<keyword id="KW-0132">Cell division</keyword>
<keyword id="KW-0997">Cell inner membrane</keyword>
<keyword id="KW-1003">Cell membrane</keyword>
<keyword id="KW-0472">Membrane</keyword>
<keyword id="KW-1185">Reference proteome</keyword>
<keyword id="KW-0812">Transmembrane</keyword>
<keyword id="KW-1133">Transmembrane helix</keyword>
<proteinExistence type="inferred from homology"/>
<dbReference type="EMBL" id="AE005674">
    <property type="protein sequence ID" value="AAN41745.1"/>
    <property type="molecule type" value="Genomic_DNA"/>
</dbReference>
<dbReference type="EMBL" id="AE014073">
    <property type="protein sequence ID" value="AAP15626.1"/>
    <property type="molecule type" value="Genomic_DNA"/>
</dbReference>
<dbReference type="RefSeq" id="NP_706038.1">
    <property type="nucleotide sequence ID" value="NC_004337.2"/>
</dbReference>
<dbReference type="RefSeq" id="WP_000625658.1">
    <property type="nucleotide sequence ID" value="NZ_WPGW01000007.1"/>
</dbReference>
<dbReference type="SMR" id="P0AEN7"/>
<dbReference type="STRING" id="198214.SF0080"/>
<dbReference type="PaxDb" id="198214-SF0080"/>
<dbReference type="DNASU" id="1076512"/>
<dbReference type="GeneID" id="1024550"/>
<dbReference type="GeneID" id="93777351"/>
<dbReference type="KEGG" id="sfl:SF0080"/>
<dbReference type="KEGG" id="sfx:S0082"/>
<dbReference type="PATRIC" id="fig|198214.7.peg.95"/>
<dbReference type="HOGENOM" id="CLU_156524_2_0_6"/>
<dbReference type="Proteomes" id="UP000001006">
    <property type="component" value="Chromosome"/>
</dbReference>
<dbReference type="Proteomes" id="UP000002673">
    <property type="component" value="Chromosome"/>
</dbReference>
<dbReference type="GO" id="GO:0032153">
    <property type="term" value="C:cell division site"/>
    <property type="evidence" value="ECO:0007669"/>
    <property type="project" value="UniProtKB-UniRule"/>
</dbReference>
<dbReference type="GO" id="GO:0005886">
    <property type="term" value="C:plasma membrane"/>
    <property type="evidence" value="ECO:0007669"/>
    <property type="project" value="UniProtKB-SubCell"/>
</dbReference>
<dbReference type="GO" id="GO:0043093">
    <property type="term" value="P:FtsZ-dependent cytokinesis"/>
    <property type="evidence" value="ECO:0007669"/>
    <property type="project" value="UniProtKB-UniRule"/>
</dbReference>
<dbReference type="HAMAP" id="MF_00910">
    <property type="entry name" value="FtsL"/>
    <property type="match status" value="1"/>
</dbReference>
<dbReference type="InterPro" id="IPR011922">
    <property type="entry name" value="Cell_div_FtsL"/>
</dbReference>
<dbReference type="NCBIfam" id="TIGR02209">
    <property type="entry name" value="ftsL_broad"/>
    <property type="match status" value="1"/>
</dbReference>
<dbReference type="NCBIfam" id="NF008040">
    <property type="entry name" value="PRK10772.1"/>
    <property type="match status" value="1"/>
</dbReference>
<dbReference type="PANTHER" id="PTHR37479">
    <property type="entry name" value="CELL DIVISION PROTEIN FTSL"/>
    <property type="match status" value="1"/>
</dbReference>
<dbReference type="PANTHER" id="PTHR37479:SF1">
    <property type="entry name" value="CELL DIVISION PROTEIN FTSL"/>
    <property type="match status" value="1"/>
</dbReference>
<dbReference type="Pfam" id="PF04999">
    <property type="entry name" value="FtsL"/>
    <property type="match status" value="1"/>
</dbReference>